<accession>B1JSD3</accession>
<reference key="1">
    <citation type="submission" date="2008-02" db="EMBL/GenBank/DDBJ databases">
        <title>Complete sequence of Yersinia pseudotuberculosis YPIII.</title>
        <authorList>
            <consortium name="US DOE Joint Genome Institute"/>
            <person name="Copeland A."/>
            <person name="Lucas S."/>
            <person name="Lapidus A."/>
            <person name="Glavina del Rio T."/>
            <person name="Dalin E."/>
            <person name="Tice H."/>
            <person name="Bruce D."/>
            <person name="Goodwin L."/>
            <person name="Pitluck S."/>
            <person name="Munk A.C."/>
            <person name="Brettin T."/>
            <person name="Detter J.C."/>
            <person name="Han C."/>
            <person name="Tapia R."/>
            <person name="Schmutz J."/>
            <person name="Larimer F."/>
            <person name="Land M."/>
            <person name="Hauser L."/>
            <person name="Challacombe J.F."/>
            <person name="Green L."/>
            <person name="Lindler L.E."/>
            <person name="Nikolich M.P."/>
            <person name="Richardson P."/>
        </authorList>
    </citation>
    <scope>NUCLEOTIDE SEQUENCE [LARGE SCALE GENOMIC DNA]</scope>
    <source>
        <strain>YPIII</strain>
    </source>
</reference>
<evidence type="ECO:0000255" key="1">
    <source>
        <dbReference type="HAMAP-Rule" id="MF_01424"/>
    </source>
</evidence>
<name>MDTC_YERPY</name>
<proteinExistence type="inferred from homology"/>
<feature type="chain" id="PRO_1000145688" description="Multidrug resistance protein MdtC">
    <location>
        <begin position="1"/>
        <end position="1024"/>
    </location>
</feature>
<feature type="transmembrane region" description="Helical" evidence="1">
    <location>
        <begin position="12"/>
        <end position="32"/>
    </location>
</feature>
<feature type="transmembrane region" description="Helical" evidence="1">
    <location>
        <begin position="333"/>
        <end position="353"/>
    </location>
</feature>
<feature type="transmembrane region" description="Helical" evidence="1">
    <location>
        <begin position="360"/>
        <end position="380"/>
    </location>
</feature>
<feature type="transmembrane region" description="Helical" evidence="1">
    <location>
        <begin position="387"/>
        <end position="407"/>
    </location>
</feature>
<feature type="transmembrane region" description="Helical" evidence="1">
    <location>
        <begin position="435"/>
        <end position="455"/>
    </location>
</feature>
<feature type="transmembrane region" description="Helical" evidence="1">
    <location>
        <begin position="469"/>
        <end position="489"/>
    </location>
</feature>
<feature type="transmembrane region" description="Helical" evidence="1">
    <location>
        <begin position="528"/>
        <end position="548"/>
    </location>
</feature>
<feature type="transmembrane region" description="Helical" evidence="1">
    <location>
        <begin position="853"/>
        <end position="873"/>
    </location>
</feature>
<feature type="transmembrane region" description="Helical" evidence="1">
    <location>
        <begin position="875"/>
        <end position="895"/>
    </location>
</feature>
<feature type="transmembrane region" description="Helical" evidence="1">
    <location>
        <begin position="897"/>
        <end position="917"/>
    </location>
</feature>
<feature type="transmembrane region" description="Helical" evidence="1">
    <location>
        <begin position="953"/>
        <end position="973"/>
    </location>
</feature>
<feature type="transmembrane region" description="Helical" evidence="1">
    <location>
        <begin position="984"/>
        <end position="1004"/>
    </location>
</feature>
<sequence>MKFFALFIQRPVATTLLTLAITLSGIIGFSLLPVSPLPQVDYPVIMVSASMPGADPETMASSVATPLERALGRIAGVNEMTSTSSLGSTRIILQFDLNRDINGAARDVQAALNAAQSLLPSGMPSRPTYRKMNPSDAPIMIMTLTSDTFSQGQLYDYASTKLAQKIAQTEGVSDVTVGGSSLPAVRVELNPSALFNQGVSLDAVRQAISAANVRRPQGSVDAAETHWQVQANDEIKTAEGYRPLIVHYNNGSPVRLQDVANVIDSVQDVRNAGMSAGQPAVLLVISREPGANIIATVDRIRAELPALRASIPASIQLNIAQDRSPTIRASLDEVERSLVIAVALVILVVFIFLRSGRATLIPAVAVPVSLIGTFAAMYLCGFSLNNLSLMALTIATGFVVDDAIVVLENISRHLEAGVKPMVAALRGVREVGFTVLSMSISLVAVFIPLLLMAGLPGRLFREFAVTLSVAIGISLVISLTLTPMMCAWLLRSHPKGQQQRIRGFGKVLLAIQQGYGRSLNWALSHTRWVMVVLLSTIALNVWLYISIPKTFFPEQDTGRMMGFIQADQSISFQSMQQKLKDFMQIVGADPAVDSVTGFTGGSRTNSGSMFISLKPLSERQETAQQVITRLRGKLAKEPGANLFLSSVQDIRVGGRHSNAAYQFTLLADDLAALREWEPKVRAALAKLPQLADVNSDQQDKGAEMALTYDRETMARLGIDVSEANALLNNAFGQRQISTIYQPLNQYKVVMEVAPEYTQDVSSLDKMFVINSNGQSIPLSYFAKWQPANAPLAVNHQGLSAASTISFNLPDGGSLSEATAAVERAMTELGVPSTVRGAFAGTAQVFQETLKSQLWLIMAAIATVYIVLGILYESYVHPLTILSTLPSAGVGALLALELFDAPFSLIALIGIMLLIGIVKKNAIMMVDFALDAQRNGNISAREAIFQASLLRFRPIIMTTLAALFGALPLVLSSGDGAELRQPLGITIVGGLVVSQLLTLYTTPVIYLYFDRLRNRFSKQPLMKLE</sequence>
<keyword id="KW-0997">Cell inner membrane</keyword>
<keyword id="KW-1003">Cell membrane</keyword>
<keyword id="KW-0472">Membrane</keyword>
<keyword id="KW-0812">Transmembrane</keyword>
<keyword id="KW-1133">Transmembrane helix</keyword>
<keyword id="KW-0813">Transport</keyword>
<comment type="subunit">
    <text evidence="1">Part of a tripartite efflux system composed of MdtA, MdtB and MdtC. MdtC forms a heteromultimer with MdtB.</text>
</comment>
<comment type="subcellular location">
    <subcellularLocation>
        <location evidence="1">Cell inner membrane</location>
        <topology evidence="1">Multi-pass membrane protein</topology>
    </subcellularLocation>
</comment>
<comment type="similarity">
    <text evidence="1">Belongs to the resistance-nodulation-cell division (RND) (TC 2.A.6) family. MdtC subfamily.</text>
</comment>
<protein>
    <recommendedName>
        <fullName evidence="1">Multidrug resistance protein MdtC</fullName>
    </recommendedName>
    <alternativeName>
        <fullName evidence="1">Multidrug transporter MdtC</fullName>
    </alternativeName>
</protein>
<gene>
    <name evidence="1" type="primary">mdtC</name>
    <name type="ordered locus">YPK_1330</name>
</gene>
<organism>
    <name type="scientific">Yersinia pseudotuberculosis serotype O:3 (strain YPIII)</name>
    <dbReference type="NCBI Taxonomy" id="502800"/>
    <lineage>
        <taxon>Bacteria</taxon>
        <taxon>Pseudomonadati</taxon>
        <taxon>Pseudomonadota</taxon>
        <taxon>Gammaproteobacteria</taxon>
        <taxon>Enterobacterales</taxon>
        <taxon>Yersiniaceae</taxon>
        <taxon>Yersinia</taxon>
    </lineage>
</organism>
<dbReference type="EMBL" id="CP000950">
    <property type="protein sequence ID" value="ACA67624.1"/>
    <property type="molecule type" value="Genomic_DNA"/>
</dbReference>
<dbReference type="RefSeq" id="WP_012303861.1">
    <property type="nucleotide sequence ID" value="NZ_CP009792.1"/>
</dbReference>
<dbReference type="SMR" id="B1JSD3"/>
<dbReference type="KEGG" id="ypy:YPK_1330"/>
<dbReference type="PATRIC" id="fig|502800.11.peg.1965"/>
<dbReference type="GO" id="GO:0005886">
    <property type="term" value="C:plasma membrane"/>
    <property type="evidence" value="ECO:0007669"/>
    <property type="project" value="UniProtKB-SubCell"/>
</dbReference>
<dbReference type="GO" id="GO:0042910">
    <property type="term" value="F:xenobiotic transmembrane transporter activity"/>
    <property type="evidence" value="ECO:0007669"/>
    <property type="project" value="TreeGrafter"/>
</dbReference>
<dbReference type="FunFam" id="1.20.1640.10:FF:000001">
    <property type="entry name" value="Efflux pump membrane transporter"/>
    <property type="match status" value="1"/>
</dbReference>
<dbReference type="FunFam" id="3.30.70.1430:FF:000001">
    <property type="entry name" value="Efflux pump membrane transporter"/>
    <property type="match status" value="1"/>
</dbReference>
<dbReference type="FunFam" id="3.30.2090.10:FF:000004">
    <property type="entry name" value="Multidrug resistance protein MdtC"/>
    <property type="match status" value="1"/>
</dbReference>
<dbReference type="Gene3D" id="3.30.70.1430">
    <property type="entry name" value="Multidrug efflux transporter AcrB pore domain"/>
    <property type="match status" value="2"/>
</dbReference>
<dbReference type="Gene3D" id="3.30.70.1440">
    <property type="entry name" value="Multidrug efflux transporter AcrB pore domain"/>
    <property type="match status" value="1"/>
</dbReference>
<dbReference type="Gene3D" id="3.30.70.1320">
    <property type="entry name" value="Multidrug efflux transporter AcrB pore domain like"/>
    <property type="match status" value="1"/>
</dbReference>
<dbReference type="Gene3D" id="3.30.2090.10">
    <property type="entry name" value="Multidrug efflux transporter AcrB TolC docking domain, DN and DC subdomains"/>
    <property type="match status" value="2"/>
</dbReference>
<dbReference type="Gene3D" id="1.20.1640.10">
    <property type="entry name" value="Multidrug efflux transporter AcrB transmembrane domain"/>
    <property type="match status" value="2"/>
</dbReference>
<dbReference type="HAMAP" id="MF_01424">
    <property type="entry name" value="MdtC"/>
    <property type="match status" value="1"/>
</dbReference>
<dbReference type="InterPro" id="IPR027463">
    <property type="entry name" value="AcrB_DN_DC_subdom"/>
</dbReference>
<dbReference type="InterPro" id="IPR001036">
    <property type="entry name" value="Acrflvin-R"/>
</dbReference>
<dbReference type="InterPro" id="IPR023931">
    <property type="entry name" value="Multidrug-R_MdtC"/>
</dbReference>
<dbReference type="NCBIfam" id="NF007905">
    <property type="entry name" value="PRK10614.1"/>
    <property type="match status" value="1"/>
</dbReference>
<dbReference type="NCBIfam" id="NF033617">
    <property type="entry name" value="RND_permease_2"/>
    <property type="match status" value="1"/>
</dbReference>
<dbReference type="PANTHER" id="PTHR32063">
    <property type="match status" value="1"/>
</dbReference>
<dbReference type="PANTHER" id="PTHR32063:SF34">
    <property type="entry name" value="MULTIDRUG RESISTANCE PROTEIN MDTC"/>
    <property type="match status" value="1"/>
</dbReference>
<dbReference type="Pfam" id="PF00873">
    <property type="entry name" value="ACR_tran"/>
    <property type="match status" value="1"/>
</dbReference>
<dbReference type="PRINTS" id="PR00702">
    <property type="entry name" value="ACRIFLAVINRP"/>
</dbReference>
<dbReference type="SUPFAM" id="SSF82693">
    <property type="entry name" value="Multidrug efflux transporter AcrB pore domain, PN1, PN2, PC1 and PC2 subdomains"/>
    <property type="match status" value="4"/>
</dbReference>
<dbReference type="SUPFAM" id="SSF82714">
    <property type="entry name" value="Multidrug efflux transporter AcrB TolC docking domain, DN and DC subdomains"/>
    <property type="match status" value="2"/>
</dbReference>
<dbReference type="SUPFAM" id="SSF82866">
    <property type="entry name" value="Multidrug efflux transporter AcrB transmembrane domain"/>
    <property type="match status" value="2"/>
</dbReference>